<keyword id="KW-0131">Cell cycle</keyword>
<keyword id="KW-0132">Cell division</keyword>
<keyword id="KW-0159">Chromosome partition</keyword>
<keyword id="KW-0963">Cytoplasm</keyword>
<keyword id="KW-0229">DNA integration</keyword>
<keyword id="KW-0233">DNA recombination</keyword>
<keyword id="KW-0238">DNA-binding</keyword>
<accession>B0UWL5</accession>
<dbReference type="EMBL" id="CP000947">
    <property type="protein sequence ID" value="ACA31951.1"/>
    <property type="molecule type" value="Genomic_DNA"/>
</dbReference>
<dbReference type="RefSeq" id="WP_012341180.1">
    <property type="nucleotide sequence ID" value="NC_010519.1"/>
</dbReference>
<dbReference type="SMR" id="B0UWL5"/>
<dbReference type="STRING" id="228400.HSM_0319"/>
<dbReference type="GeneID" id="31486599"/>
<dbReference type="KEGG" id="hsm:HSM_0319"/>
<dbReference type="HOGENOM" id="CLU_027562_9_0_6"/>
<dbReference type="GO" id="GO:0005737">
    <property type="term" value="C:cytoplasm"/>
    <property type="evidence" value="ECO:0007669"/>
    <property type="project" value="UniProtKB-SubCell"/>
</dbReference>
<dbReference type="GO" id="GO:0003677">
    <property type="term" value="F:DNA binding"/>
    <property type="evidence" value="ECO:0007669"/>
    <property type="project" value="UniProtKB-KW"/>
</dbReference>
<dbReference type="GO" id="GO:0009037">
    <property type="term" value="F:tyrosine-based site-specific recombinase activity"/>
    <property type="evidence" value="ECO:0007669"/>
    <property type="project" value="UniProtKB-UniRule"/>
</dbReference>
<dbReference type="GO" id="GO:0051301">
    <property type="term" value="P:cell division"/>
    <property type="evidence" value="ECO:0007669"/>
    <property type="project" value="UniProtKB-KW"/>
</dbReference>
<dbReference type="GO" id="GO:0007059">
    <property type="term" value="P:chromosome segregation"/>
    <property type="evidence" value="ECO:0007669"/>
    <property type="project" value="UniProtKB-UniRule"/>
</dbReference>
<dbReference type="GO" id="GO:0006313">
    <property type="term" value="P:DNA transposition"/>
    <property type="evidence" value="ECO:0007669"/>
    <property type="project" value="UniProtKB-UniRule"/>
</dbReference>
<dbReference type="CDD" id="cd00798">
    <property type="entry name" value="INT_XerDC_C"/>
    <property type="match status" value="1"/>
</dbReference>
<dbReference type="Gene3D" id="1.10.150.130">
    <property type="match status" value="1"/>
</dbReference>
<dbReference type="Gene3D" id="1.10.443.10">
    <property type="entry name" value="Intergrase catalytic core"/>
    <property type="match status" value="1"/>
</dbReference>
<dbReference type="HAMAP" id="MF_01808">
    <property type="entry name" value="Recomb_XerC_XerD"/>
    <property type="match status" value="1"/>
</dbReference>
<dbReference type="InterPro" id="IPR044068">
    <property type="entry name" value="CB"/>
</dbReference>
<dbReference type="InterPro" id="IPR011010">
    <property type="entry name" value="DNA_brk_join_enz"/>
</dbReference>
<dbReference type="InterPro" id="IPR013762">
    <property type="entry name" value="Integrase-like_cat_sf"/>
</dbReference>
<dbReference type="InterPro" id="IPR002104">
    <property type="entry name" value="Integrase_catalytic"/>
</dbReference>
<dbReference type="InterPro" id="IPR010998">
    <property type="entry name" value="Integrase_recombinase_N"/>
</dbReference>
<dbReference type="InterPro" id="IPR004107">
    <property type="entry name" value="Integrase_SAM-like_N"/>
</dbReference>
<dbReference type="InterPro" id="IPR011931">
    <property type="entry name" value="Recomb_XerC"/>
</dbReference>
<dbReference type="InterPro" id="IPR023009">
    <property type="entry name" value="Tyrosine_recombinase_XerC/XerD"/>
</dbReference>
<dbReference type="InterPro" id="IPR050090">
    <property type="entry name" value="Tyrosine_recombinase_XerCD"/>
</dbReference>
<dbReference type="NCBIfam" id="NF001399">
    <property type="entry name" value="PRK00283.1"/>
    <property type="match status" value="1"/>
</dbReference>
<dbReference type="NCBIfam" id="TIGR02224">
    <property type="entry name" value="recomb_XerC"/>
    <property type="match status" value="1"/>
</dbReference>
<dbReference type="PANTHER" id="PTHR30349">
    <property type="entry name" value="PHAGE INTEGRASE-RELATED"/>
    <property type="match status" value="1"/>
</dbReference>
<dbReference type="PANTHER" id="PTHR30349:SF81">
    <property type="entry name" value="TYROSINE RECOMBINASE XERC"/>
    <property type="match status" value="1"/>
</dbReference>
<dbReference type="Pfam" id="PF02899">
    <property type="entry name" value="Phage_int_SAM_1"/>
    <property type="match status" value="1"/>
</dbReference>
<dbReference type="Pfam" id="PF00589">
    <property type="entry name" value="Phage_integrase"/>
    <property type="match status" value="1"/>
</dbReference>
<dbReference type="SUPFAM" id="SSF56349">
    <property type="entry name" value="DNA breaking-rejoining enzymes"/>
    <property type="match status" value="1"/>
</dbReference>
<dbReference type="SUPFAM" id="SSF47823">
    <property type="entry name" value="lambda integrase-like, N-terminal domain"/>
    <property type="match status" value="1"/>
</dbReference>
<dbReference type="PROSITE" id="PS51900">
    <property type="entry name" value="CB"/>
    <property type="match status" value="1"/>
</dbReference>
<dbReference type="PROSITE" id="PS51898">
    <property type="entry name" value="TYR_RECOMBINASE"/>
    <property type="match status" value="1"/>
</dbReference>
<reference key="1">
    <citation type="submission" date="2008-02" db="EMBL/GenBank/DDBJ databases">
        <title>Complete sequence of Haemophilus somnus 2336.</title>
        <authorList>
            <consortium name="US DOE Joint Genome Institute"/>
            <person name="Siddaramappa S."/>
            <person name="Duncan A.J."/>
            <person name="Challacombe J.F."/>
            <person name="Rainey D."/>
            <person name="Gillaspy A.F."/>
            <person name="Carson M."/>
            <person name="Gipson J."/>
            <person name="Gipson M."/>
            <person name="Bruce D."/>
            <person name="Detter J.C."/>
            <person name="Han C.S."/>
            <person name="Land M."/>
            <person name="Tapia R."/>
            <person name="Thompson L.S."/>
            <person name="Orvis J."/>
            <person name="Zaitshik J."/>
            <person name="Barnes G."/>
            <person name="Brettin T.S."/>
            <person name="Dyer D.W."/>
            <person name="Inzana T.J."/>
        </authorList>
    </citation>
    <scope>NUCLEOTIDE SEQUENCE [LARGE SCALE GENOMIC DNA]</scope>
    <source>
        <strain>2336</strain>
    </source>
</reference>
<gene>
    <name evidence="1" type="primary">xerC</name>
    <name type="ordered locus">HSM_0319</name>
</gene>
<organism>
    <name type="scientific">Histophilus somni (strain 2336)</name>
    <name type="common">Haemophilus somnus</name>
    <dbReference type="NCBI Taxonomy" id="228400"/>
    <lineage>
        <taxon>Bacteria</taxon>
        <taxon>Pseudomonadati</taxon>
        <taxon>Pseudomonadota</taxon>
        <taxon>Gammaproteobacteria</taxon>
        <taxon>Pasteurellales</taxon>
        <taxon>Pasteurellaceae</taxon>
        <taxon>Histophilus</taxon>
    </lineage>
</organism>
<evidence type="ECO:0000255" key="1">
    <source>
        <dbReference type="HAMAP-Rule" id="MF_01808"/>
    </source>
</evidence>
<evidence type="ECO:0000255" key="2">
    <source>
        <dbReference type="PROSITE-ProRule" id="PRU01246"/>
    </source>
</evidence>
<evidence type="ECO:0000255" key="3">
    <source>
        <dbReference type="PROSITE-ProRule" id="PRU01248"/>
    </source>
</evidence>
<sequence length="295" mass="34440">MHILLQKYYNYLRIERQLSPYTLINYQRQLEKIVVILQQNDIHSWQQVTPSVVRFVLAQSRKEGLHERSLALRLSALRQFLNYLVVQGELKVNSAVGISAPKQSKYLPKNMDMEQVQQLLTNESKEPIDLRDKAMMELMYSSGLRLSELQSLNLNSINIRSREVRVIGKGNKERILPFGRYASQAIQQWLKVRLLFNPKDEALFVSQLGNRISHRSIQKRMETWGIRQGLNGHLNPHKLRHSFATHMLENSSDLRAVQELLGHSNLSTTQIYTHLDFQHLAQVYDKAHPRAKRKK</sequence>
<comment type="function">
    <text evidence="1">Site-specific tyrosine recombinase, which acts by catalyzing the cutting and rejoining of the recombining DNA molecules. The XerC-XerD complex is essential to convert dimers of the bacterial chromosome into monomers to permit their segregation at cell division. It also contributes to the segregational stability of plasmids.</text>
</comment>
<comment type="subunit">
    <text evidence="1">Forms a cyclic heterotetrameric complex composed of two molecules of XerC and two molecules of XerD.</text>
</comment>
<comment type="subcellular location">
    <subcellularLocation>
        <location evidence="1">Cytoplasm</location>
    </subcellularLocation>
</comment>
<comment type="similarity">
    <text evidence="1">Belongs to the 'phage' integrase family. XerC subfamily.</text>
</comment>
<proteinExistence type="inferred from homology"/>
<protein>
    <recommendedName>
        <fullName evidence="1">Tyrosine recombinase XerC</fullName>
    </recommendedName>
</protein>
<name>XERC_HISS2</name>
<feature type="chain" id="PRO_1000088238" description="Tyrosine recombinase XerC">
    <location>
        <begin position="1"/>
        <end position="295"/>
    </location>
</feature>
<feature type="domain" description="Core-binding (CB)" evidence="3">
    <location>
        <begin position="1"/>
        <end position="85"/>
    </location>
</feature>
<feature type="domain" description="Tyr recombinase" evidence="2">
    <location>
        <begin position="106"/>
        <end position="285"/>
    </location>
</feature>
<feature type="active site" evidence="1">
    <location>
        <position position="145"/>
    </location>
</feature>
<feature type="active site" evidence="1">
    <location>
        <position position="169"/>
    </location>
</feature>
<feature type="active site" evidence="1">
    <location>
        <position position="237"/>
    </location>
</feature>
<feature type="active site" evidence="1">
    <location>
        <position position="240"/>
    </location>
</feature>
<feature type="active site" evidence="1">
    <location>
        <position position="263"/>
    </location>
</feature>
<feature type="active site" description="O-(3'-phospho-DNA)-tyrosine intermediate" evidence="1">
    <location>
        <position position="272"/>
    </location>
</feature>